<keyword id="KW-0450">Lipoyl</keyword>
<comment type="function">
    <text evidence="1">The glycine cleavage system catalyzes the degradation of glycine. The H protein shuttles the methylamine group of glycine from the P protein to the T protein.</text>
</comment>
<comment type="cofactor">
    <cofactor evidence="1">
        <name>(R)-lipoate</name>
        <dbReference type="ChEBI" id="CHEBI:83088"/>
    </cofactor>
    <text evidence="1">Binds 1 lipoyl cofactor covalently.</text>
</comment>
<comment type="subunit">
    <text evidence="1">The glycine cleavage system is composed of four proteins: P, T, L and H.</text>
</comment>
<comment type="similarity">
    <text evidence="1">Belongs to the GcvH family.</text>
</comment>
<dbReference type="EMBL" id="CP000552">
    <property type="protein sequence ID" value="ABM73066.1"/>
    <property type="molecule type" value="Genomic_DNA"/>
</dbReference>
<dbReference type="RefSeq" id="WP_011821150.1">
    <property type="nucleotide sequence ID" value="NC_008817.1"/>
</dbReference>
<dbReference type="SMR" id="A2BZ55"/>
<dbReference type="STRING" id="167542.P9515_18591"/>
<dbReference type="GeneID" id="60201724"/>
<dbReference type="KEGG" id="pmc:P9515_18591"/>
<dbReference type="eggNOG" id="COG0509">
    <property type="taxonomic scope" value="Bacteria"/>
</dbReference>
<dbReference type="HOGENOM" id="CLU_097408_2_0_3"/>
<dbReference type="OrthoDB" id="9796712at2"/>
<dbReference type="Proteomes" id="UP000001589">
    <property type="component" value="Chromosome"/>
</dbReference>
<dbReference type="GO" id="GO:0005829">
    <property type="term" value="C:cytosol"/>
    <property type="evidence" value="ECO:0007669"/>
    <property type="project" value="TreeGrafter"/>
</dbReference>
<dbReference type="GO" id="GO:0005960">
    <property type="term" value="C:glycine cleavage complex"/>
    <property type="evidence" value="ECO:0007669"/>
    <property type="project" value="InterPro"/>
</dbReference>
<dbReference type="GO" id="GO:0019464">
    <property type="term" value="P:glycine decarboxylation via glycine cleavage system"/>
    <property type="evidence" value="ECO:0007669"/>
    <property type="project" value="UniProtKB-UniRule"/>
</dbReference>
<dbReference type="CDD" id="cd06848">
    <property type="entry name" value="GCS_H"/>
    <property type="match status" value="1"/>
</dbReference>
<dbReference type="Gene3D" id="2.40.50.100">
    <property type="match status" value="1"/>
</dbReference>
<dbReference type="HAMAP" id="MF_00272">
    <property type="entry name" value="GcvH"/>
    <property type="match status" value="1"/>
</dbReference>
<dbReference type="InterPro" id="IPR003016">
    <property type="entry name" value="2-oxoA_DH_lipoyl-BS"/>
</dbReference>
<dbReference type="InterPro" id="IPR000089">
    <property type="entry name" value="Biotin_lipoyl"/>
</dbReference>
<dbReference type="InterPro" id="IPR002930">
    <property type="entry name" value="GCV_H"/>
</dbReference>
<dbReference type="InterPro" id="IPR033753">
    <property type="entry name" value="GCV_H/Fam206"/>
</dbReference>
<dbReference type="InterPro" id="IPR017453">
    <property type="entry name" value="GCV_H_sub"/>
</dbReference>
<dbReference type="InterPro" id="IPR011053">
    <property type="entry name" value="Single_hybrid_motif"/>
</dbReference>
<dbReference type="NCBIfam" id="TIGR00527">
    <property type="entry name" value="gcvH"/>
    <property type="match status" value="1"/>
</dbReference>
<dbReference type="NCBIfam" id="NF002270">
    <property type="entry name" value="PRK01202.1"/>
    <property type="match status" value="1"/>
</dbReference>
<dbReference type="PANTHER" id="PTHR11715">
    <property type="entry name" value="GLYCINE CLEAVAGE SYSTEM H PROTEIN"/>
    <property type="match status" value="1"/>
</dbReference>
<dbReference type="PANTHER" id="PTHR11715:SF3">
    <property type="entry name" value="GLYCINE CLEAVAGE SYSTEM H PROTEIN-RELATED"/>
    <property type="match status" value="1"/>
</dbReference>
<dbReference type="Pfam" id="PF01597">
    <property type="entry name" value="GCV_H"/>
    <property type="match status" value="1"/>
</dbReference>
<dbReference type="SUPFAM" id="SSF51230">
    <property type="entry name" value="Single hybrid motif"/>
    <property type="match status" value="1"/>
</dbReference>
<dbReference type="PROSITE" id="PS50968">
    <property type="entry name" value="BIOTINYL_LIPOYL"/>
    <property type="match status" value="1"/>
</dbReference>
<dbReference type="PROSITE" id="PS00189">
    <property type="entry name" value="LIPOYL"/>
    <property type="match status" value="1"/>
</dbReference>
<protein>
    <recommendedName>
        <fullName evidence="1">Glycine cleavage system H protein</fullName>
    </recommendedName>
</protein>
<sequence length="129" mass="14408">MSYKFPNNLKYADTHEYVKEENGLLKIGVSEFAIDQLGDIVFVELVEKGTNLQKGETFGTIESVKAVEEVYLPFAGEVLSVNESVIDNPEILQNDPIGNGWLLIIKPESNVLLDELMNSDEYKSKVSPN</sequence>
<feature type="chain" id="PRO_0000302415" description="Glycine cleavage system H protein">
    <location>
        <begin position="1"/>
        <end position="129"/>
    </location>
</feature>
<feature type="domain" description="Lipoyl-binding" evidence="2">
    <location>
        <begin position="24"/>
        <end position="106"/>
    </location>
</feature>
<feature type="modified residue" description="N6-lipoyllysine" evidence="1">
    <location>
        <position position="65"/>
    </location>
</feature>
<organism>
    <name type="scientific">Prochlorococcus marinus (strain MIT 9515)</name>
    <dbReference type="NCBI Taxonomy" id="167542"/>
    <lineage>
        <taxon>Bacteria</taxon>
        <taxon>Bacillati</taxon>
        <taxon>Cyanobacteriota</taxon>
        <taxon>Cyanophyceae</taxon>
        <taxon>Synechococcales</taxon>
        <taxon>Prochlorococcaceae</taxon>
        <taxon>Prochlorococcus</taxon>
    </lineage>
</organism>
<evidence type="ECO:0000255" key="1">
    <source>
        <dbReference type="HAMAP-Rule" id="MF_00272"/>
    </source>
</evidence>
<evidence type="ECO:0000255" key="2">
    <source>
        <dbReference type="PROSITE-ProRule" id="PRU01066"/>
    </source>
</evidence>
<name>GCSH_PROM5</name>
<accession>A2BZ55</accession>
<proteinExistence type="inferred from homology"/>
<reference key="1">
    <citation type="journal article" date="2007" name="PLoS Genet.">
        <title>Patterns and implications of gene gain and loss in the evolution of Prochlorococcus.</title>
        <authorList>
            <person name="Kettler G.C."/>
            <person name="Martiny A.C."/>
            <person name="Huang K."/>
            <person name="Zucker J."/>
            <person name="Coleman M.L."/>
            <person name="Rodrigue S."/>
            <person name="Chen F."/>
            <person name="Lapidus A."/>
            <person name="Ferriera S."/>
            <person name="Johnson J."/>
            <person name="Steglich C."/>
            <person name="Church G.M."/>
            <person name="Richardson P."/>
            <person name="Chisholm S.W."/>
        </authorList>
    </citation>
    <scope>NUCLEOTIDE SEQUENCE [LARGE SCALE GENOMIC DNA]</scope>
    <source>
        <strain>MIT 9515</strain>
    </source>
</reference>
<gene>
    <name evidence="1" type="primary">gcvH</name>
    <name type="ordered locus">P9515_18591</name>
</gene>